<feature type="chain" id="PRO_0000147811" description="Phosphoglucomutase">
    <location>
        <begin position="1"/>
        <end position="460"/>
    </location>
</feature>
<feature type="active site" description="Phosphoserine intermediate" evidence="2">
    <location>
        <position position="103"/>
    </location>
</feature>
<feature type="binding site" evidence="2">
    <location>
        <begin position="103"/>
        <end position="104"/>
    </location>
    <ligand>
        <name>substrate</name>
    </ligand>
</feature>
<feature type="binding site" description="via phosphate group" evidence="2">
    <location>
        <position position="103"/>
    </location>
    <ligand>
        <name>Mg(2+)</name>
        <dbReference type="ChEBI" id="CHEBI:18420"/>
    </ligand>
</feature>
<feature type="binding site" evidence="2">
    <location>
        <position position="113"/>
    </location>
    <ligand>
        <name>substrate</name>
    </ligand>
</feature>
<feature type="binding site" evidence="2">
    <location>
        <position position="239"/>
    </location>
    <ligand>
        <name>Mg(2+)</name>
        <dbReference type="ChEBI" id="CHEBI:18420"/>
    </ligand>
</feature>
<feature type="binding site" evidence="2">
    <location>
        <position position="241"/>
    </location>
    <ligand>
        <name>Mg(2+)</name>
        <dbReference type="ChEBI" id="CHEBI:18420"/>
    </ligand>
</feature>
<feature type="binding site" evidence="2">
    <location>
        <begin position="243"/>
        <end position="244"/>
    </location>
    <ligand>
        <name>substrate</name>
    </ligand>
</feature>
<feature type="binding site" evidence="2">
    <location>
        <position position="243"/>
    </location>
    <ligand>
        <name>Mg(2+)</name>
        <dbReference type="ChEBI" id="CHEBI:18420"/>
    </ligand>
</feature>
<feature type="binding site" evidence="2">
    <location>
        <position position="303"/>
    </location>
    <ligand>
        <name>substrate</name>
    </ligand>
</feature>
<feature type="binding site" evidence="2">
    <location>
        <begin position="322"/>
        <end position="324"/>
    </location>
    <ligand>
        <name>substrate</name>
    </ligand>
</feature>
<protein>
    <recommendedName>
        <fullName>Phosphoglucomutase</fullName>
        <shortName>PGM</shortName>
        <ecNumber>5.4.2.2</ecNumber>
    </recommendedName>
    <alternativeName>
        <fullName>Glucose phosphomutase</fullName>
    </alternativeName>
</protein>
<comment type="function">
    <text>This enzyme participates in both the breakdown and synthesis of glucose.</text>
</comment>
<comment type="catalytic activity">
    <reaction>
        <text>alpha-D-glucose 1-phosphate = alpha-D-glucose 6-phosphate</text>
        <dbReference type="Rhea" id="RHEA:23536"/>
        <dbReference type="ChEBI" id="CHEBI:58225"/>
        <dbReference type="ChEBI" id="CHEBI:58601"/>
        <dbReference type="EC" id="5.4.2.2"/>
    </reaction>
</comment>
<comment type="cofactor">
    <cofactor evidence="1">
        <name>Mg(2+)</name>
        <dbReference type="ChEBI" id="CHEBI:18420"/>
    </cofactor>
    <text evidence="1">Binds 1 Mg(2+) ion per subunit.</text>
</comment>
<comment type="subcellular location">
    <subcellularLocation>
        <location evidence="1">Cytoplasm</location>
    </subcellularLocation>
</comment>
<comment type="similarity">
    <text evidence="3">Belongs to the phosphohexose mutase family.</text>
</comment>
<sequence>MANIARDIFKAYDIRGIVGKTLTDDAAYLIGRAIAAKAAEKGMTRIALGRDGRLSGPELMEHIQRGFTDSGIGVLNVGMVATPMLYFAAINECGGSGVMITGSHNPPDYNGFKMMLGGDTLAGEAIQELLAIVEKDGFVAADKQGNVTEKDISGEYHNHIVGHIKLKRPMKIAIDAGNGVGGAFAGKLYKGLGNEVTELFCDVDGTFPNHHPDPSKPKNLQDLIAALKNGDAEIGLAFDGDADRLGVVTKDGNIIYPDRQLMLFAQDVLNRNPGAKVIFDVKSTRLLAPWIKEHGGEAIMEKTGHSFIKSAMKKTGALVAGEMSGHIFFKERWFGFDDGLYAGARLLEILSASDNPSEVLNNLPQSISTPELNIALPEGSNGHQVIDELAAKAEFEGATEIITIDGLRVEFPDGFGLMRASNTTPILVLRFEADTQAAIERIQNQFKAVIESNPNLIWPL</sequence>
<organism>
    <name type="scientific">Neisseria meningitidis serogroup A / serotype 4A (strain DSM 15465 / Z2491)</name>
    <dbReference type="NCBI Taxonomy" id="122587"/>
    <lineage>
        <taxon>Bacteria</taxon>
        <taxon>Pseudomonadati</taxon>
        <taxon>Pseudomonadota</taxon>
        <taxon>Betaproteobacteria</taxon>
        <taxon>Neisseriales</taxon>
        <taxon>Neisseriaceae</taxon>
        <taxon>Neisseria</taxon>
    </lineage>
</organism>
<reference key="1">
    <citation type="journal article" date="2000" name="Nature">
        <title>Complete DNA sequence of a serogroup A strain of Neisseria meningitidis Z2491.</title>
        <authorList>
            <person name="Parkhill J."/>
            <person name="Achtman M."/>
            <person name="James K.D."/>
            <person name="Bentley S.D."/>
            <person name="Churcher C.M."/>
            <person name="Klee S.R."/>
            <person name="Morelli G."/>
            <person name="Basham D."/>
            <person name="Brown D."/>
            <person name="Chillingworth T."/>
            <person name="Davies R.M."/>
            <person name="Davis P."/>
            <person name="Devlin K."/>
            <person name="Feltwell T."/>
            <person name="Hamlin N."/>
            <person name="Holroyd S."/>
            <person name="Jagels K."/>
            <person name="Leather S."/>
            <person name="Moule S."/>
            <person name="Mungall K.L."/>
            <person name="Quail M.A."/>
            <person name="Rajandream M.A."/>
            <person name="Rutherford K.M."/>
            <person name="Simmonds M."/>
            <person name="Skelton J."/>
            <person name="Whitehead S."/>
            <person name="Spratt B.G."/>
            <person name="Barrell B.G."/>
        </authorList>
    </citation>
    <scope>NUCLEOTIDE SEQUENCE [LARGE SCALE GENOMIC DNA]</scope>
    <source>
        <strain>DSM 15465 / Z2491</strain>
    </source>
</reference>
<dbReference type="EC" id="5.4.2.2"/>
<dbReference type="EMBL" id="AL157959">
    <property type="protein sequence ID" value="CAM08223.1"/>
    <property type="molecule type" value="Genomic_DNA"/>
</dbReference>
<dbReference type="PIR" id="G81947">
    <property type="entry name" value="G81947"/>
</dbReference>
<dbReference type="RefSeq" id="WP_002236853.1">
    <property type="nucleotide sequence ID" value="NC_003116.1"/>
</dbReference>
<dbReference type="SMR" id="P57002"/>
<dbReference type="EnsemblBacteria" id="CAM08223">
    <property type="protein sequence ID" value="CAM08223"/>
    <property type="gene ID" value="NMA1001"/>
</dbReference>
<dbReference type="KEGG" id="nma:NMA1001"/>
<dbReference type="HOGENOM" id="CLU_016950_9_1_4"/>
<dbReference type="Proteomes" id="UP000000626">
    <property type="component" value="Chromosome"/>
</dbReference>
<dbReference type="GO" id="GO:0005737">
    <property type="term" value="C:cytoplasm"/>
    <property type="evidence" value="ECO:0007669"/>
    <property type="project" value="UniProtKB-SubCell"/>
</dbReference>
<dbReference type="GO" id="GO:0000287">
    <property type="term" value="F:magnesium ion binding"/>
    <property type="evidence" value="ECO:0007669"/>
    <property type="project" value="InterPro"/>
</dbReference>
<dbReference type="GO" id="GO:0004614">
    <property type="term" value="F:phosphoglucomutase activity"/>
    <property type="evidence" value="ECO:0007669"/>
    <property type="project" value="UniProtKB-EC"/>
</dbReference>
<dbReference type="GO" id="GO:0006006">
    <property type="term" value="P:glucose metabolic process"/>
    <property type="evidence" value="ECO:0007669"/>
    <property type="project" value="UniProtKB-KW"/>
</dbReference>
<dbReference type="CDD" id="cd03089">
    <property type="entry name" value="PMM_PGM"/>
    <property type="match status" value="1"/>
</dbReference>
<dbReference type="Gene3D" id="3.40.120.10">
    <property type="entry name" value="Alpha-D-Glucose-1,6-Bisphosphate, subunit A, domain 3"/>
    <property type="match status" value="3"/>
</dbReference>
<dbReference type="Gene3D" id="3.30.310.50">
    <property type="entry name" value="Alpha-D-phosphohexomutase, C-terminal domain"/>
    <property type="match status" value="1"/>
</dbReference>
<dbReference type="InterPro" id="IPR005844">
    <property type="entry name" value="A-D-PHexomutase_a/b/a-I"/>
</dbReference>
<dbReference type="InterPro" id="IPR016055">
    <property type="entry name" value="A-D-PHexomutase_a/b/a-I/II/III"/>
</dbReference>
<dbReference type="InterPro" id="IPR005845">
    <property type="entry name" value="A-D-PHexomutase_a/b/a-II"/>
</dbReference>
<dbReference type="InterPro" id="IPR005846">
    <property type="entry name" value="A-D-PHexomutase_a/b/a-III"/>
</dbReference>
<dbReference type="InterPro" id="IPR005843">
    <property type="entry name" value="A-D-PHexomutase_C"/>
</dbReference>
<dbReference type="InterPro" id="IPR036900">
    <property type="entry name" value="A-D-PHexomutase_C_sf"/>
</dbReference>
<dbReference type="InterPro" id="IPR016066">
    <property type="entry name" value="A-D-PHexomutase_CS"/>
</dbReference>
<dbReference type="InterPro" id="IPR005841">
    <property type="entry name" value="Alpha-D-phosphohexomutase_SF"/>
</dbReference>
<dbReference type="PANTHER" id="PTHR43771">
    <property type="entry name" value="PHOSPHOMANNOMUTASE"/>
    <property type="match status" value="1"/>
</dbReference>
<dbReference type="PANTHER" id="PTHR43771:SF2">
    <property type="entry name" value="PHOSPHOMANNOMUTASE_PHOSPHOGLUCOMUTASE"/>
    <property type="match status" value="1"/>
</dbReference>
<dbReference type="Pfam" id="PF02878">
    <property type="entry name" value="PGM_PMM_I"/>
    <property type="match status" value="1"/>
</dbReference>
<dbReference type="Pfam" id="PF02879">
    <property type="entry name" value="PGM_PMM_II"/>
    <property type="match status" value="1"/>
</dbReference>
<dbReference type="Pfam" id="PF02880">
    <property type="entry name" value="PGM_PMM_III"/>
    <property type="match status" value="1"/>
</dbReference>
<dbReference type="Pfam" id="PF00408">
    <property type="entry name" value="PGM_PMM_IV"/>
    <property type="match status" value="1"/>
</dbReference>
<dbReference type="PRINTS" id="PR00509">
    <property type="entry name" value="PGMPMM"/>
</dbReference>
<dbReference type="SUPFAM" id="SSF55957">
    <property type="entry name" value="Phosphoglucomutase, C-terminal domain"/>
    <property type="match status" value="1"/>
</dbReference>
<dbReference type="SUPFAM" id="SSF53738">
    <property type="entry name" value="Phosphoglucomutase, first 3 domains"/>
    <property type="match status" value="3"/>
</dbReference>
<dbReference type="PROSITE" id="PS00710">
    <property type="entry name" value="PGM_PMM"/>
    <property type="match status" value="1"/>
</dbReference>
<keyword id="KW-0119">Carbohydrate metabolism</keyword>
<keyword id="KW-0963">Cytoplasm</keyword>
<keyword id="KW-0313">Glucose metabolism</keyword>
<keyword id="KW-0413">Isomerase</keyword>
<keyword id="KW-0460">Magnesium</keyword>
<keyword id="KW-0479">Metal-binding</keyword>
<keyword id="KW-0597">Phosphoprotein</keyword>
<proteinExistence type="inferred from homology"/>
<accession>P57002</accession>
<accession>A1IR39</accession>
<evidence type="ECO:0000250" key="1"/>
<evidence type="ECO:0000250" key="2">
    <source>
        <dbReference type="UniProtKB" id="P00949"/>
    </source>
</evidence>
<evidence type="ECO:0000305" key="3"/>
<name>PGM_NEIMA</name>
<gene>
    <name type="primary">pgm</name>
    <name type="ordered locus">NMA1001</name>
</gene>